<dbReference type="EMBL" id="CU329671">
    <property type="protein sequence ID" value="CAA21152.1"/>
    <property type="molecule type" value="Genomic_DNA"/>
</dbReference>
<dbReference type="PIR" id="T39972">
    <property type="entry name" value="T39972"/>
</dbReference>
<dbReference type="RefSeq" id="NP_595962.1">
    <property type="nucleotide sequence ID" value="NM_001021871.2"/>
</dbReference>
<dbReference type="SMR" id="O74769"/>
<dbReference type="BioGRID" id="276828">
    <property type="interactions" value="24"/>
</dbReference>
<dbReference type="FunCoup" id="O74769">
    <property type="interactions" value="415"/>
</dbReference>
<dbReference type="STRING" id="284812.O74769"/>
<dbReference type="iPTMnet" id="O74769"/>
<dbReference type="PaxDb" id="4896-SPBC24C6.08c.1"/>
<dbReference type="EnsemblFungi" id="SPBC24C6.08c.1">
    <property type="protein sequence ID" value="SPBC24C6.08c.1:pep"/>
    <property type="gene ID" value="SPBC24C6.08c"/>
</dbReference>
<dbReference type="GeneID" id="2540297"/>
<dbReference type="KEGG" id="spo:2540297"/>
<dbReference type="PomBase" id="SPBC24C6.08c">
    <property type="gene designation" value="bhd1"/>
</dbReference>
<dbReference type="VEuPathDB" id="FungiDB:SPBC24C6.08c"/>
<dbReference type="eggNOG" id="KOG3715">
    <property type="taxonomic scope" value="Eukaryota"/>
</dbReference>
<dbReference type="HOGENOM" id="CLU_035854_0_1_1"/>
<dbReference type="InParanoid" id="O74769"/>
<dbReference type="OMA" id="THFCDKH"/>
<dbReference type="PhylomeDB" id="O74769"/>
<dbReference type="PRO" id="PR:O74769"/>
<dbReference type="Proteomes" id="UP000002485">
    <property type="component" value="Chromosome II"/>
</dbReference>
<dbReference type="GO" id="GO:0005829">
    <property type="term" value="C:cytosol"/>
    <property type="evidence" value="ECO:0007005"/>
    <property type="project" value="PomBase"/>
</dbReference>
<dbReference type="GO" id="GO:1990877">
    <property type="term" value="C:FNIP-folliculin RagC/D GAP"/>
    <property type="evidence" value="ECO:0000269"/>
    <property type="project" value="PomBase"/>
</dbReference>
<dbReference type="GO" id="GO:0005634">
    <property type="term" value="C:nucleus"/>
    <property type="evidence" value="ECO:0007005"/>
    <property type="project" value="PomBase"/>
</dbReference>
<dbReference type="GO" id="GO:0005774">
    <property type="term" value="C:vacuolar membrane"/>
    <property type="evidence" value="ECO:0000269"/>
    <property type="project" value="PomBase"/>
</dbReference>
<dbReference type="GO" id="GO:0005096">
    <property type="term" value="F:GTPase activator activity"/>
    <property type="evidence" value="ECO:0007669"/>
    <property type="project" value="InterPro"/>
</dbReference>
<dbReference type="GO" id="GO:0043001">
    <property type="term" value="P:Golgi to plasma membrane protein transport"/>
    <property type="evidence" value="ECO:0000266"/>
    <property type="project" value="PomBase"/>
</dbReference>
<dbReference type="GO" id="GO:1904262">
    <property type="term" value="P:negative regulation of TORC1 signaling"/>
    <property type="evidence" value="ECO:0000315"/>
    <property type="project" value="PomBase"/>
</dbReference>
<dbReference type="GO" id="GO:1904263">
    <property type="term" value="P:positive regulation of TORC1 signaling"/>
    <property type="evidence" value="ECO:0000269"/>
    <property type="project" value="PomBase"/>
</dbReference>
<dbReference type="InterPro" id="IPR037521">
    <property type="entry name" value="FLCN/SMCR8_DENN"/>
</dbReference>
<dbReference type="InterPro" id="IPR021713">
    <property type="entry name" value="Folliculin"/>
</dbReference>
<dbReference type="InterPro" id="IPR037520">
    <property type="entry name" value="Folliculin/SMCR8_longin"/>
</dbReference>
<dbReference type="PANTHER" id="PTHR31441:SF2">
    <property type="entry name" value="FOLLICULIN"/>
    <property type="match status" value="1"/>
</dbReference>
<dbReference type="PANTHER" id="PTHR31441">
    <property type="entry name" value="FOLLICULIN FAMILY MEMBER"/>
    <property type="match status" value="1"/>
</dbReference>
<dbReference type="Pfam" id="PF11704">
    <property type="entry name" value="Folliculin"/>
    <property type="match status" value="1"/>
</dbReference>
<dbReference type="PROSITE" id="PS51834">
    <property type="entry name" value="DENN_FLCN_SMCR8"/>
    <property type="match status" value="1"/>
</dbReference>
<sequence>MDVVFALGHFCEAEGPSIIFCTQKLHRSTVSKFFEHPTSKRSIGVTENGNDSPEAFKNELDNRNNADSQSLQSSTESLFKADSEDYLCKKVSKGPESPRVNSFHNSYSRNQSPISRKSSCVTCSTVLPLEFSVPDVQPRLYTNSSTNPDVLYMSSQHPHTQQRYSTLKRLMVRCLSCEYSTLSEASDSMSNPLFFGDQDNGYVISQSFSLRDPSARGGLRRYAIIATCPNQLDLILRYSFISEKFLHIVQFLRISSFNTKNDYSSSRSKTTASSSNGTFASPSFNISSLSGSSNIGTAPSYEISSSIGANVSSLAHTQRLPSFSFLRRRDDIGEGRSLVDITCWDGIFVGLHSSFSWILEVWDLLVV</sequence>
<keyword id="KW-0963">Cytoplasm</keyword>
<keyword id="KW-0539">Nucleus</keyword>
<keyword id="KW-1185">Reference proteome</keyword>
<organism>
    <name type="scientific">Schizosaccharomyces pombe (strain 972 / ATCC 24843)</name>
    <name type="common">Fission yeast</name>
    <dbReference type="NCBI Taxonomy" id="284812"/>
    <lineage>
        <taxon>Eukaryota</taxon>
        <taxon>Fungi</taxon>
        <taxon>Dikarya</taxon>
        <taxon>Ascomycota</taxon>
        <taxon>Taphrinomycotina</taxon>
        <taxon>Schizosaccharomycetes</taxon>
        <taxon>Schizosaccharomycetales</taxon>
        <taxon>Schizosaccharomycetaceae</taxon>
        <taxon>Schizosaccharomyces</taxon>
    </lineage>
</organism>
<proteinExistence type="inferred from homology"/>
<evidence type="ECO:0000255" key="1">
    <source>
        <dbReference type="PROSITE-ProRule" id="PRU01178"/>
    </source>
</evidence>
<evidence type="ECO:0000256" key="2">
    <source>
        <dbReference type="SAM" id="MobiDB-lite"/>
    </source>
</evidence>
<evidence type="ECO:0000269" key="3">
    <source>
    </source>
</evidence>
<evidence type="ECO:0000305" key="4"/>
<accession>O74769</accession>
<reference key="1">
    <citation type="journal article" date="2002" name="Nature">
        <title>The genome sequence of Schizosaccharomyces pombe.</title>
        <authorList>
            <person name="Wood V."/>
            <person name="Gwilliam R."/>
            <person name="Rajandream M.A."/>
            <person name="Lyne M.H."/>
            <person name="Lyne R."/>
            <person name="Stewart A."/>
            <person name="Sgouros J.G."/>
            <person name="Peat N."/>
            <person name="Hayles J."/>
            <person name="Baker S.G."/>
            <person name="Basham D."/>
            <person name="Bowman S."/>
            <person name="Brooks K."/>
            <person name="Brown D."/>
            <person name="Brown S."/>
            <person name="Chillingworth T."/>
            <person name="Churcher C.M."/>
            <person name="Collins M."/>
            <person name="Connor R."/>
            <person name="Cronin A."/>
            <person name="Davis P."/>
            <person name="Feltwell T."/>
            <person name="Fraser A."/>
            <person name="Gentles S."/>
            <person name="Goble A."/>
            <person name="Hamlin N."/>
            <person name="Harris D.E."/>
            <person name="Hidalgo J."/>
            <person name="Hodgson G."/>
            <person name="Holroyd S."/>
            <person name="Hornsby T."/>
            <person name="Howarth S."/>
            <person name="Huckle E.J."/>
            <person name="Hunt S."/>
            <person name="Jagels K."/>
            <person name="James K.D."/>
            <person name="Jones L."/>
            <person name="Jones M."/>
            <person name="Leather S."/>
            <person name="McDonald S."/>
            <person name="McLean J."/>
            <person name="Mooney P."/>
            <person name="Moule S."/>
            <person name="Mungall K.L."/>
            <person name="Murphy L.D."/>
            <person name="Niblett D."/>
            <person name="Odell C."/>
            <person name="Oliver K."/>
            <person name="O'Neil S."/>
            <person name="Pearson D."/>
            <person name="Quail M.A."/>
            <person name="Rabbinowitsch E."/>
            <person name="Rutherford K.M."/>
            <person name="Rutter S."/>
            <person name="Saunders D."/>
            <person name="Seeger K."/>
            <person name="Sharp S."/>
            <person name="Skelton J."/>
            <person name="Simmonds M.N."/>
            <person name="Squares R."/>
            <person name="Squares S."/>
            <person name="Stevens K."/>
            <person name="Taylor K."/>
            <person name="Taylor R.G."/>
            <person name="Tivey A."/>
            <person name="Walsh S.V."/>
            <person name="Warren T."/>
            <person name="Whitehead S."/>
            <person name="Woodward J.R."/>
            <person name="Volckaert G."/>
            <person name="Aert R."/>
            <person name="Robben J."/>
            <person name="Grymonprez B."/>
            <person name="Weltjens I."/>
            <person name="Vanstreels E."/>
            <person name="Rieger M."/>
            <person name="Schaefer M."/>
            <person name="Mueller-Auer S."/>
            <person name="Gabel C."/>
            <person name="Fuchs M."/>
            <person name="Duesterhoeft A."/>
            <person name="Fritzc C."/>
            <person name="Holzer E."/>
            <person name="Moestl D."/>
            <person name="Hilbert H."/>
            <person name="Borzym K."/>
            <person name="Langer I."/>
            <person name="Beck A."/>
            <person name="Lehrach H."/>
            <person name="Reinhardt R."/>
            <person name="Pohl T.M."/>
            <person name="Eger P."/>
            <person name="Zimmermann W."/>
            <person name="Wedler H."/>
            <person name="Wambutt R."/>
            <person name="Purnelle B."/>
            <person name="Goffeau A."/>
            <person name="Cadieu E."/>
            <person name="Dreano S."/>
            <person name="Gloux S."/>
            <person name="Lelaure V."/>
            <person name="Mottier S."/>
            <person name="Galibert F."/>
            <person name="Aves S.J."/>
            <person name="Xiang Z."/>
            <person name="Hunt C."/>
            <person name="Moore K."/>
            <person name="Hurst S.M."/>
            <person name="Lucas M."/>
            <person name="Rochet M."/>
            <person name="Gaillardin C."/>
            <person name="Tallada V.A."/>
            <person name="Garzon A."/>
            <person name="Thode G."/>
            <person name="Daga R.R."/>
            <person name="Cruzado L."/>
            <person name="Jimenez J."/>
            <person name="Sanchez M."/>
            <person name="del Rey F."/>
            <person name="Benito J."/>
            <person name="Dominguez A."/>
            <person name="Revuelta J.L."/>
            <person name="Moreno S."/>
            <person name="Armstrong J."/>
            <person name="Forsburg S.L."/>
            <person name="Cerutti L."/>
            <person name="Lowe T."/>
            <person name="McCombie W.R."/>
            <person name="Paulsen I."/>
            <person name="Potashkin J."/>
            <person name="Shpakovski G.V."/>
            <person name="Ussery D."/>
            <person name="Barrell B.G."/>
            <person name="Nurse P."/>
        </authorList>
    </citation>
    <scope>NUCLEOTIDE SEQUENCE [LARGE SCALE GENOMIC DNA]</scope>
    <source>
        <strain>972 / ATCC 24843</strain>
    </source>
</reference>
<reference key="2">
    <citation type="journal article" date="2006" name="Nat. Biotechnol.">
        <title>ORFeome cloning and global analysis of protein localization in the fission yeast Schizosaccharomyces pombe.</title>
        <authorList>
            <person name="Matsuyama A."/>
            <person name="Arai R."/>
            <person name="Yashiroda Y."/>
            <person name="Shirai A."/>
            <person name="Kamata A."/>
            <person name="Sekido S."/>
            <person name="Kobayashi Y."/>
            <person name="Hashimoto A."/>
            <person name="Hamamoto M."/>
            <person name="Hiraoka Y."/>
            <person name="Horinouchi S."/>
            <person name="Yoshida M."/>
        </authorList>
    </citation>
    <scope>SUBCELLULAR LOCATION [LARGE SCALE ANALYSIS]</scope>
</reference>
<gene>
    <name type="primary">bhd1</name>
    <name type="ORF">SPBC24C6.08c</name>
</gene>
<protein>
    <recommendedName>
        <fullName>Folliculin-like protein bhd1</fullName>
    </recommendedName>
</protein>
<name>BHD1_SCHPO</name>
<comment type="subcellular location">
    <subcellularLocation>
        <location evidence="3">Nucleus</location>
    </subcellularLocation>
    <subcellularLocation>
        <location evidence="3">Cytoplasm</location>
    </subcellularLocation>
</comment>
<comment type="similarity">
    <text evidence="4">Belongs to the folliculin family.</text>
</comment>
<feature type="chain" id="PRO_0000223944" description="Folliculin-like protein bhd1">
    <location>
        <begin position="1"/>
        <end position="367"/>
    </location>
</feature>
<feature type="domain" description="uDENN FLCN/SMCR8-type" evidence="1">
    <location>
        <begin position="131"/>
        <end position="302"/>
    </location>
</feature>
<feature type="region of interest" description="Disordered" evidence="2">
    <location>
        <begin position="41"/>
        <end position="75"/>
    </location>
</feature>
<feature type="region of interest" description="Disordered" evidence="2">
    <location>
        <begin position="92"/>
        <end position="115"/>
    </location>
</feature>
<feature type="compositionally biased region" description="Basic and acidic residues" evidence="2">
    <location>
        <begin position="54"/>
        <end position="64"/>
    </location>
</feature>
<feature type="compositionally biased region" description="Polar residues" evidence="2">
    <location>
        <begin position="65"/>
        <end position="75"/>
    </location>
</feature>
<feature type="compositionally biased region" description="Polar residues" evidence="2">
    <location>
        <begin position="99"/>
        <end position="115"/>
    </location>
</feature>